<comment type="function">
    <text>Clathrin is the major protein of the polyhedral coat of coated pits and vesicles.</text>
</comment>
<comment type="subunit">
    <text evidence="6 7">Clathrin coats are formed from molecules containing 3 heavy chains and 3 light chains. Interacts (via N-terminus) with HIP1. Interacts with HIP1R.</text>
</comment>
<comment type="subcellular location">
    <subcellularLocation>
        <location>Cytoplasmic vesicle membrane</location>
        <topology>Peripheral membrane protein</topology>
        <orientation>Cytoplasmic side</orientation>
    </subcellularLocation>
    <subcellularLocation>
        <location>Membrane</location>
        <location>Coated pit</location>
        <topology>Peripheral membrane protein</topology>
        <orientation>Cytoplasmic side</orientation>
    </subcellularLocation>
    <text>Cytoplasmic face of coated pits and vesicles.</text>
</comment>
<comment type="alternative products">
    <event type="alternative splicing"/>
    <isoform>
        <id>P09497-1</id>
        <name>Brain</name>
        <sequence type="displayed"/>
    </isoform>
    <isoform>
        <id>P09497-2</id>
        <name>Non-brain</name>
        <sequence type="described" ref="VSP_001098"/>
    </isoform>
</comment>
<comment type="similarity">
    <text evidence="11">Belongs to the clathrin light chain family.</text>
</comment>
<evidence type="ECO:0000250" key="1"/>
<evidence type="ECO:0000250" key="2">
    <source>
        <dbReference type="UniProtKB" id="P04975"/>
    </source>
</evidence>
<evidence type="ECO:0000250" key="3">
    <source>
        <dbReference type="UniProtKB" id="P09496"/>
    </source>
</evidence>
<evidence type="ECO:0000250" key="4">
    <source>
        <dbReference type="UniProtKB" id="Q6IRU5"/>
    </source>
</evidence>
<evidence type="ECO:0000256" key="5">
    <source>
        <dbReference type="SAM" id="MobiDB-lite"/>
    </source>
</evidence>
<evidence type="ECO:0000269" key="6">
    <source>
    </source>
</evidence>
<evidence type="ECO:0000269" key="7">
    <source>
    </source>
</evidence>
<evidence type="ECO:0000303" key="8">
    <source>
    </source>
</evidence>
<evidence type="ECO:0000303" key="9">
    <source ref="2"/>
</evidence>
<evidence type="ECO:0000303" key="10">
    <source ref="3"/>
</evidence>
<evidence type="ECO:0000305" key="11"/>
<evidence type="ECO:0007744" key="12">
    <source>
    </source>
</evidence>
<dbReference type="EMBL" id="M20469">
    <property type="protein sequence ID" value="AAA51818.1"/>
    <property type="molecule type" value="mRNA"/>
</dbReference>
<dbReference type="EMBL" id="M20470">
    <property type="protein sequence ID" value="AAA59506.1"/>
    <property type="molecule type" value="mRNA"/>
</dbReference>
<dbReference type="EMBL" id="BT007028">
    <property type="protein sequence ID" value="AAP35675.1"/>
    <property type="molecule type" value="mRNA"/>
</dbReference>
<dbReference type="EMBL" id="CR536577">
    <property type="protein sequence ID" value="CAG38814.1"/>
    <property type="molecule type" value="mRNA"/>
</dbReference>
<dbReference type="EMBL" id="CH471195">
    <property type="protein sequence ID" value="EAW85079.1"/>
    <property type="molecule type" value="Genomic_DNA"/>
</dbReference>
<dbReference type="EMBL" id="BC006332">
    <property type="protein sequence ID" value="AAH06332.1"/>
    <property type="molecule type" value="mRNA"/>
</dbReference>
<dbReference type="EMBL" id="BC006457">
    <property type="protein sequence ID" value="AAH06457.1"/>
    <property type="molecule type" value="mRNA"/>
</dbReference>
<dbReference type="CCDS" id="CCDS4402.1">
    <molecule id="P09497-2"/>
</dbReference>
<dbReference type="CCDS" id="CCDS4403.1">
    <molecule id="P09497-1"/>
</dbReference>
<dbReference type="PIR" id="B31775">
    <property type="entry name" value="B31775"/>
</dbReference>
<dbReference type="RefSeq" id="NP_001825.1">
    <molecule id="P09497-2"/>
    <property type="nucleotide sequence ID" value="NM_001834.5"/>
</dbReference>
<dbReference type="RefSeq" id="NP_009028.1">
    <molecule id="P09497-1"/>
    <property type="nucleotide sequence ID" value="NM_007097.5"/>
</dbReference>
<dbReference type="SMR" id="P09497"/>
<dbReference type="BioGRID" id="107622">
    <property type="interactions" value="194"/>
</dbReference>
<dbReference type="FunCoup" id="P09497">
    <property type="interactions" value="1839"/>
</dbReference>
<dbReference type="IntAct" id="P09497">
    <property type="interactions" value="128"/>
</dbReference>
<dbReference type="MINT" id="P09497"/>
<dbReference type="STRING" id="9606.ENSP00000309415"/>
<dbReference type="TCDB" id="8.A.137.1.2">
    <property type="family name" value="the clathrin (clathrin) family"/>
</dbReference>
<dbReference type="GlyGen" id="P09497">
    <property type="glycosylation" value="2 sites, 1 O-linked glycan (1 site)"/>
</dbReference>
<dbReference type="iPTMnet" id="P09497"/>
<dbReference type="PhosphoSitePlus" id="P09497"/>
<dbReference type="BioMuta" id="CLTB"/>
<dbReference type="OGP" id="P09497"/>
<dbReference type="jPOST" id="P09497"/>
<dbReference type="MassIVE" id="P09497"/>
<dbReference type="PaxDb" id="9606-ENSP00000309415"/>
<dbReference type="PeptideAtlas" id="P09497"/>
<dbReference type="ProteomicsDB" id="52240">
    <molecule id="P09497-1"/>
</dbReference>
<dbReference type="ProteomicsDB" id="52241">
    <molecule id="P09497-2"/>
</dbReference>
<dbReference type="Pumba" id="P09497"/>
<dbReference type="Antibodypedia" id="29088">
    <property type="antibodies" value="238 antibodies from 26 providers"/>
</dbReference>
<dbReference type="DNASU" id="1212"/>
<dbReference type="Ensembl" id="ENST00000310418.9">
    <molecule id="P09497-1"/>
    <property type="protein sequence ID" value="ENSP00000309415.4"/>
    <property type="gene ID" value="ENSG00000175416.16"/>
</dbReference>
<dbReference type="Ensembl" id="ENST00000345807.7">
    <molecule id="P09497-2"/>
    <property type="protein sequence ID" value="ENSP00000310812.4"/>
    <property type="gene ID" value="ENSG00000175416.16"/>
</dbReference>
<dbReference type="GeneID" id="1212"/>
<dbReference type="KEGG" id="hsa:1212"/>
<dbReference type="MANE-Select" id="ENST00000310418.9">
    <property type="protein sequence ID" value="ENSP00000309415.4"/>
    <property type="RefSeq nucleotide sequence ID" value="NM_007097.5"/>
    <property type="RefSeq protein sequence ID" value="NP_009028.1"/>
</dbReference>
<dbReference type="UCSC" id="uc003meh.4">
    <molecule id="P09497-1"/>
    <property type="organism name" value="human"/>
</dbReference>
<dbReference type="AGR" id="HGNC:2091"/>
<dbReference type="CTD" id="1212"/>
<dbReference type="DisGeNET" id="1212"/>
<dbReference type="GeneCards" id="CLTB"/>
<dbReference type="HGNC" id="HGNC:2091">
    <property type="gene designation" value="CLTB"/>
</dbReference>
<dbReference type="HPA" id="ENSG00000175416">
    <property type="expression patterns" value="Low tissue specificity"/>
</dbReference>
<dbReference type="MIM" id="118970">
    <property type="type" value="gene"/>
</dbReference>
<dbReference type="neXtProt" id="NX_P09497"/>
<dbReference type="OpenTargets" id="ENSG00000175416"/>
<dbReference type="PharmGKB" id="PA26617"/>
<dbReference type="VEuPathDB" id="HostDB:ENSG00000175416"/>
<dbReference type="eggNOG" id="KOG4031">
    <property type="taxonomic scope" value="Eukaryota"/>
</dbReference>
<dbReference type="GeneTree" id="ENSGT00940000160186"/>
<dbReference type="HOGENOM" id="CLU_091462_1_0_1"/>
<dbReference type="InParanoid" id="P09497"/>
<dbReference type="OMA" id="KEWVCER"/>
<dbReference type="OrthoDB" id="5512at2759"/>
<dbReference type="PAN-GO" id="P09497">
    <property type="GO annotations" value="6 GO annotations based on evolutionary models"/>
</dbReference>
<dbReference type="PhylomeDB" id="P09497"/>
<dbReference type="TreeFam" id="TF313162"/>
<dbReference type="PathwayCommons" id="P09497"/>
<dbReference type="Reactome" id="R-HSA-190873">
    <property type="pathway name" value="Gap junction degradation"/>
</dbReference>
<dbReference type="Reactome" id="R-HSA-196025">
    <property type="pathway name" value="Formation of annular gap junctions"/>
</dbReference>
<dbReference type="Reactome" id="R-HSA-3928665">
    <property type="pathway name" value="EPH-ephrin mediated repulsion of cells"/>
</dbReference>
<dbReference type="Reactome" id="R-HSA-432720">
    <property type="pathway name" value="Lysosome Vesicle Biogenesis"/>
</dbReference>
<dbReference type="Reactome" id="R-HSA-5099900">
    <property type="pathway name" value="WNT5A-dependent internalization of FZD4"/>
</dbReference>
<dbReference type="Reactome" id="R-HSA-5140745">
    <property type="pathway name" value="WNT5A-dependent internalization of FZD2, FZD5 and ROR2"/>
</dbReference>
<dbReference type="Reactome" id="R-HSA-8856825">
    <property type="pathway name" value="Cargo recognition for clathrin-mediated endocytosis"/>
</dbReference>
<dbReference type="Reactome" id="R-HSA-8856828">
    <property type="pathway name" value="Clathrin-mediated endocytosis"/>
</dbReference>
<dbReference type="SignaLink" id="P09497"/>
<dbReference type="SIGNOR" id="P09497"/>
<dbReference type="BioGRID-ORCS" id="1212">
    <property type="hits" value="24 hits in 1163 CRISPR screens"/>
</dbReference>
<dbReference type="CD-CODE" id="8C2F96ED">
    <property type="entry name" value="Centrosome"/>
</dbReference>
<dbReference type="CD-CODE" id="FB4E32DD">
    <property type="entry name" value="Presynaptic clusters and postsynaptic densities"/>
</dbReference>
<dbReference type="ChiTaRS" id="CLTB">
    <property type="organism name" value="human"/>
</dbReference>
<dbReference type="GenomeRNAi" id="1212"/>
<dbReference type="Pharos" id="P09497">
    <property type="development level" value="Tbio"/>
</dbReference>
<dbReference type="PRO" id="PR:P09497"/>
<dbReference type="Proteomes" id="UP000005640">
    <property type="component" value="Chromosome 5"/>
</dbReference>
<dbReference type="RNAct" id="P09497">
    <property type="molecule type" value="protein"/>
</dbReference>
<dbReference type="Bgee" id="ENSG00000175416">
    <property type="expression patterns" value="Expressed in lower esophagus mucosa and 205 other cell types or tissues"/>
</dbReference>
<dbReference type="ExpressionAtlas" id="P09497">
    <property type="expression patterns" value="baseline and differential"/>
</dbReference>
<dbReference type="GO" id="GO:0060170">
    <property type="term" value="C:ciliary membrane"/>
    <property type="evidence" value="ECO:0007669"/>
    <property type="project" value="Ensembl"/>
</dbReference>
<dbReference type="GO" id="GO:0030118">
    <property type="term" value="C:clathrin coat"/>
    <property type="evidence" value="ECO:0000250"/>
    <property type="project" value="UniProtKB"/>
</dbReference>
<dbReference type="GO" id="GO:0030132">
    <property type="term" value="C:clathrin coat of coated pit"/>
    <property type="evidence" value="ECO:0007669"/>
    <property type="project" value="InterPro"/>
</dbReference>
<dbReference type="GO" id="GO:0030130">
    <property type="term" value="C:clathrin coat of trans-Golgi network vesicle"/>
    <property type="evidence" value="ECO:0007669"/>
    <property type="project" value="InterPro"/>
</dbReference>
<dbReference type="GO" id="GO:0030125">
    <property type="term" value="C:clathrin vesicle coat"/>
    <property type="evidence" value="ECO:0000318"/>
    <property type="project" value="GO_Central"/>
</dbReference>
<dbReference type="GO" id="GO:0045334">
    <property type="term" value="C:clathrin-coated endocytic vesicle"/>
    <property type="evidence" value="ECO:0000303"/>
    <property type="project" value="ARUK-UCL"/>
</dbReference>
<dbReference type="GO" id="GO:0005829">
    <property type="term" value="C:cytosol"/>
    <property type="evidence" value="ECO:0000314"/>
    <property type="project" value="HPA"/>
</dbReference>
<dbReference type="GO" id="GO:0043231">
    <property type="term" value="C:intracellular membrane-bounded organelle"/>
    <property type="evidence" value="ECO:0000314"/>
    <property type="project" value="HPA"/>
</dbReference>
<dbReference type="GO" id="GO:0005886">
    <property type="term" value="C:plasma membrane"/>
    <property type="evidence" value="ECO:0000314"/>
    <property type="project" value="HPA"/>
</dbReference>
<dbReference type="GO" id="GO:0098835">
    <property type="term" value="C:presynaptic endocytic zone membrane"/>
    <property type="evidence" value="ECO:0007669"/>
    <property type="project" value="Ensembl"/>
</dbReference>
<dbReference type="GO" id="GO:0030672">
    <property type="term" value="C:synaptic vesicle membrane"/>
    <property type="evidence" value="ECO:0000318"/>
    <property type="project" value="GO_Central"/>
</dbReference>
<dbReference type="GO" id="GO:0005802">
    <property type="term" value="C:trans-Golgi network"/>
    <property type="evidence" value="ECO:0007669"/>
    <property type="project" value="Ensembl"/>
</dbReference>
<dbReference type="GO" id="GO:0032050">
    <property type="term" value="F:clathrin heavy chain binding"/>
    <property type="evidence" value="ECO:0000318"/>
    <property type="project" value="GO_Central"/>
</dbReference>
<dbReference type="GO" id="GO:0042277">
    <property type="term" value="F:peptide binding"/>
    <property type="evidence" value="ECO:0007669"/>
    <property type="project" value="Ensembl"/>
</dbReference>
<dbReference type="GO" id="GO:0005198">
    <property type="term" value="F:structural molecule activity"/>
    <property type="evidence" value="ECO:0007669"/>
    <property type="project" value="InterPro"/>
</dbReference>
<dbReference type="GO" id="GO:0072583">
    <property type="term" value="P:clathrin-dependent endocytosis"/>
    <property type="evidence" value="ECO:0000318"/>
    <property type="project" value="GO_Central"/>
</dbReference>
<dbReference type="GO" id="GO:0006886">
    <property type="term" value="P:intracellular protein transport"/>
    <property type="evidence" value="ECO:0007669"/>
    <property type="project" value="InterPro"/>
</dbReference>
<dbReference type="GO" id="GO:0048488">
    <property type="term" value="P:synaptic vesicle endocytosis"/>
    <property type="evidence" value="ECO:0007669"/>
    <property type="project" value="Ensembl"/>
</dbReference>
<dbReference type="InterPro" id="IPR000996">
    <property type="entry name" value="Clathrin_L-chain"/>
</dbReference>
<dbReference type="PANTHER" id="PTHR10639">
    <property type="entry name" value="CLATHRIN LIGHT CHAIN"/>
    <property type="match status" value="1"/>
</dbReference>
<dbReference type="PANTHER" id="PTHR10639:SF28">
    <property type="entry name" value="CLATHRIN LIGHT CHAIN B"/>
    <property type="match status" value="1"/>
</dbReference>
<dbReference type="Pfam" id="PF01086">
    <property type="entry name" value="Clathrin_lg_ch"/>
    <property type="match status" value="1"/>
</dbReference>
<dbReference type="PROSITE" id="PS00224">
    <property type="entry name" value="CLATHRIN_LIGHT_CHN_1"/>
    <property type="match status" value="1"/>
</dbReference>
<dbReference type="PROSITE" id="PS00581">
    <property type="entry name" value="CLATHRIN_LIGHT_CHN_2"/>
    <property type="match status" value="1"/>
</dbReference>
<organism>
    <name type="scientific">Homo sapiens</name>
    <name type="common">Human</name>
    <dbReference type="NCBI Taxonomy" id="9606"/>
    <lineage>
        <taxon>Eukaryota</taxon>
        <taxon>Metazoa</taxon>
        <taxon>Chordata</taxon>
        <taxon>Craniata</taxon>
        <taxon>Vertebrata</taxon>
        <taxon>Euteleostomi</taxon>
        <taxon>Mammalia</taxon>
        <taxon>Eutheria</taxon>
        <taxon>Euarchontoglires</taxon>
        <taxon>Primates</taxon>
        <taxon>Haplorrhini</taxon>
        <taxon>Catarrhini</taxon>
        <taxon>Hominidae</taxon>
        <taxon>Homo</taxon>
    </lineage>
</organism>
<protein>
    <recommendedName>
        <fullName>Clathrin light chain B</fullName>
        <shortName>Lcb</shortName>
    </recommendedName>
</protein>
<reference key="1">
    <citation type="journal article" date="1988" name="J. Biol. Chem.">
        <title>Structure of human clathrin light chains. Conservation of light chain polymorphism in three mammalian species.</title>
        <authorList>
            <person name="Jackson A.P."/>
            <person name="Parham P."/>
        </authorList>
    </citation>
    <scope>NUCLEOTIDE SEQUENCE [MRNA]</scope>
    <scope>ALTERNATIVE SPLICING</scope>
</reference>
<reference key="2">
    <citation type="submission" date="2003-05" db="EMBL/GenBank/DDBJ databases">
        <title>Cloning of human full-length CDSs in BD Creator(TM) system donor vector.</title>
        <authorList>
            <person name="Kalnine N."/>
            <person name="Chen X."/>
            <person name="Rolfs A."/>
            <person name="Halleck A."/>
            <person name="Hines L."/>
            <person name="Eisenstein S."/>
            <person name="Koundinya M."/>
            <person name="Raphael J."/>
            <person name="Moreira D."/>
            <person name="Kelley T."/>
            <person name="LaBaer J."/>
            <person name="Lin Y."/>
            <person name="Phelan M."/>
            <person name="Farmer A."/>
        </authorList>
    </citation>
    <scope>NUCLEOTIDE SEQUENCE [LARGE SCALE MRNA] (ISOFORM NON-BRAIN)</scope>
</reference>
<reference key="3">
    <citation type="submission" date="2004-06" db="EMBL/GenBank/DDBJ databases">
        <title>Cloning of human full open reading frames in Gateway(TM) system entry vector (pDONR201).</title>
        <authorList>
            <person name="Halleck A."/>
            <person name="Ebert L."/>
            <person name="Mkoundinya M."/>
            <person name="Schick M."/>
            <person name="Eisenstein S."/>
            <person name="Neubert P."/>
            <person name="Kstrang K."/>
            <person name="Schatten R."/>
            <person name="Shen B."/>
            <person name="Henze S."/>
            <person name="Mar W."/>
            <person name="Korn B."/>
            <person name="Zuo D."/>
            <person name="Hu Y."/>
            <person name="LaBaer J."/>
        </authorList>
    </citation>
    <scope>NUCLEOTIDE SEQUENCE [LARGE SCALE MRNA] (ISOFORM NON-BRAIN)</scope>
</reference>
<reference key="4">
    <citation type="submission" date="2005-07" db="EMBL/GenBank/DDBJ databases">
        <authorList>
            <person name="Mural R.J."/>
            <person name="Istrail S."/>
            <person name="Sutton G.G."/>
            <person name="Florea L."/>
            <person name="Halpern A.L."/>
            <person name="Mobarry C.M."/>
            <person name="Lippert R."/>
            <person name="Walenz B."/>
            <person name="Shatkay H."/>
            <person name="Dew I."/>
            <person name="Miller J.R."/>
            <person name="Flanigan M.J."/>
            <person name="Edwards N.J."/>
            <person name="Bolanos R."/>
            <person name="Fasulo D."/>
            <person name="Halldorsson B.V."/>
            <person name="Hannenhalli S."/>
            <person name="Turner R."/>
            <person name="Yooseph S."/>
            <person name="Lu F."/>
            <person name="Nusskern D.R."/>
            <person name="Shue B.C."/>
            <person name="Zheng X.H."/>
            <person name="Zhong F."/>
            <person name="Delcher A.L."/>
            <person name="Huson D.H."/>
            <person name="Kravitz S.A."/>
            <person name="Mouchard L."/>
            <person name="Reinert K."/>
            <person name="Remington K.A."/>
            <person name="Clark A.G."/>
            <person name="Waterman M.S."/>
            <person name="Eichler E.E."/>
            <person name="Adams M.D."/>
            <person name="Hunkapiller M.W."/>
            <person name="Myers E.W."/>
            <person name="Venter J.C."/>
        </authorList>
    </citation>
    <scope>NUCLEOTIDE SEQUENCE [LARGE SCALE GENOMIC DNA]</scope>
</reference>
<reference key="5">
    <citation type="journal article" date="2004" name="Genome Res.">
        <title>The status, quality, and expansion of the NIH full-length cDNA project: the Mammalian Gene Collection (MGC).</title>
        <authorList>
            <consortium name="The MGC Project Team"/>
        </authorList>
    </citation>
    <scope>NUCLEOTIDE SEQUENCE [LARGE SCALE MRNA] (ISOFORM NON-BRAIN)</scope>
    <source>
        <tissue>Lung</tissue>
        <tissue>Retinal pigment epithelium</tissue>
    </source>
</reference>
<reference key="6">
    <citation type="journal article" date="2002" name="J. Biol. Chem.">
        <title>HIP1 and HIP12 display differential binding to F-actin, AP2, and clathrin. Identification of a novel interaction with clathrin light chain.</title>
        <authorList>
            <person name="Legendre-Guillemin V."/>
            <person name="Metzler M."/>
            <person name="Charbonneau M."/>
            <person name="Gan L."/>
            <person name="Chopra V."/>
            <person name="Philie J."/>
            <person name="Hayden M.R."/>
            <person name="McPherson P.S."/>
        </authorList>
    </citation>
    <scope>INTERACTION WITH HIP1 AND HIP1R</scope>
</reference>
<reference key="7">
    <citation type="journal article" date="2005" name="J. Biol. Chem.">
        <title>Huntingtin-interacting protein 1 (Hip1) and Hip1-related protein (Hip1R) bind the conserved sequence of clathrin light chains and thereby influence clathrin assembly in vitro and actin distribution in vivo.</title>
        <authorList>
            <person name="Chen C.-Y."/>
            <person name="Brodsky F.M."/>
        </authorList>
    </citation>
    <scope>INTERACTION WITH HIP1R</scope>
</reference>
<reference key="8">
    <citation type="journal article" date="2011" name="BMC Syst. Biol.">
        <title>Initial characterization of the human central proteome.</title>
        <authorList>
            <person name="Burkard T.R."/>
            <person name="Planyavsky M."/>
            <person name="Kaupe I."/>
            <person name="Breitwieser F.P."/>
            <person name="Buerckstuemmer T."/>
            <person name="Bennett K.L."/>
            <person name="Superti-Furga G."/>
            <person name="Colinge J."/>
        </authorList>
    </citation>
    <scope>IDENTIFICATION BY MASS SPECTROMETRY [LARGE SCALE ANALYSIS]</scope>
</reference>
<reference key="9">
    <citation type="journal article" date="2013" name="J. Proteome Res.">
        <title>Toward a comprehensive characterization of a human cancer cell phosphoproteome.</title>
        <authorList>
            <person name="Zhou H."/>
            <person name="Di Palma S."/>
            <person name="Preisinger C."/>
            <person name="Peng M."/>
            <person name="Polat A.N."/>
            <person name="Heck A.J."/>
            <person name="Mohammed S."/>
        </authorList>
    </citation>
    <scope>PHOSPHORYLATION [LARGE SCALE ANALYSIS] AT THR-187</scope>
    <scope>IDENTIFICATION BY MASS SPECTROMETRY [LARGE SCALE ANALYSIS]</scope>
    <source>
        <tissue>Erythroleukemia</tissue>
    </source>
</reference>
<reference key="10">
    <citation type="journal article" date="2014" name="J. Proteomics">
        <title>An enzyme assisted RP-RPLC approach for in-depth analysis of human liver phosphoproteome.</title>
        <authorList>
            <person name="Bian Y."/>
            <person name="Song C."/>
            <person name="Cheng K."/>
            <person name="Dong M."/>
            <person name="Wang F."/>
            <person name="Huang J."/>
            <person name="Sun D."/>
            <person name="Wang L."/>
            <person name="Ye M."/>
            <person name="Zou H."/>
        </authorList>
    </citation>
    <scope>IDENTIFICATION BY MASS SPECTROMETRY [LARGE SCALE ANALYSIS]</scope>
    <source>
        <tissue>Liver</tissue>
    </source>
</reference>
<proteinExistence type="evidence at protein level"/>
<feature type="chain" id="PRO_0000205771" description="Clathrin light chain B">
    <location>
        <begin position="1"/>
        <end position="229"/>
    </location>
</feature>
<feature type="region of interest" description="Disordered" evidence="5">
    <location>
        <begin position="1"/>
        <end position="82"/>
    </location>
</feature>
<feature type="region of interest" description="Involved in binding clathrin heavy chain">
    <location>
        <begin position="93"/>
        <end position="155"/>
    </location>
</feature>
<feature type="compositionally biased region" description="Low complexity" evidence="5">
    <location>
        <begin position="1"/>
        <end position="17"/>
    </location>
</feature>
<feature type="compositionally biased region" description="Polar residues" evidence="5">
    <location>
        <begin position="58"/>
        <end position="73"/>
    </location>
</feature>
<feature type="modified residue" description="Phosphoserine" evidence="2">
    <location>
        <position position="11"/>
    </location>
</feature>
<feature type="modified residue" description="Phosphoserine" evidence="2">
    <location>
        <position position="13"/>
    </location>
</feature>
<feature type="modified residue" description="Phosphothreonine" evidence="12">
    <location>
        <position position="187"/>
    </location>
</feature>
<feature type="modified residue" description="N6-acetyllysine" evidence="4">
    <location>
        <position position="204"/>
    </location>
</feature>
<feature type="modified residue" description="Phosphoserine" evidence="3">
    <location>
        <position position="217"/>
    </location>
</feature>
<feature type="disulfide bond" evidence="1">
    <location>
        <begin position="199"/>
        <end position="209"/>
    </location>
</feature>
<feature type="splice variant" id="VSP_001098" description="In isoform Non-brain." evidence="8 9 10">
    <location>
        <begin position="156"/>
        <end position="173"/>
    </location>
</feature>
<feature type="sequence conflict" description="In Ref. 3; CAG38814." evidence="11" ref="3">
    <original>F</original>
    <variation>I</variation>
    <location>
        <position position="5"/>
    </location>
</feature>
<gene>
    <name type="primary">CLTB</name>
</gene>
<accession>P09497</accession>
<accession>Q53Y37</accession>
<accession>Q6FHW1</accession>
<name>CLCB_HUMAN</name>
<keyword id="KW-0007">Acetylation</keyword>
<keyword id="KW-0025">Alternative splicing</keyword>
<keyword id="KW-0106">Calcium</keyword>
<keyword id="KW-0168">Coated pit</keyword>
<keyword id="KW-0968">Cytoplasmic vesicle</keyword>
<keyword id="KW-1015">Disulfide bond</keyword>
<keyword id="KW-0472">Membrane</keyword>
<keyword id="KW-0597">Phosphoprotein</keyword>
<keyword id="KW-1267">Proteomics identification</keyword>
<keyword id="KW-1185">Reference proteome</keyword>
<sequence length="229" mass="25190">MADDFGFFSSSESGAPEAAEEDPAAAFLAQQESEIAGIENDEGFGAPAGSHAAPAQPGPTSGAGSEDMGTTVNGDVFQEANGPADGYAAIAQADRLTQEPESIRKWREEQRKRLQELDAASKVTEQEWREKAKKDLEEWNQRQSEQVEKNKINNRIADKAFYQQPDADIIGYVASEEAFVKESKEETPGTEWEKVAQLCDFNPKSSKQCKDVSRLRSVLMSLKQTPLSR</sequence>